<comment type="function">
    <text evidence="1">Involved in protein export. Acts as a chaperone by maintaining the newly synthesized protein in an open conformation. Functions as a peptidyl-prolyl cis-trans isomerase.</text>
</comment>
<comment type="catalytic activity">
    <reaction evidence="1">
        <text>[protein]-peptidylproline (omega=180) = [protein]-peptidylproline (omega=0)</text>
        <dbReference type="Rhea" id="RHEA:16237"/>
        <dbReference type="Rhea" id="RHEA-COMP:10747"/>
        <dbReference type="Rhea" id="RHEA-COMP:10748"/>
        <dbReference type="ChEBI" id="CHEBI:83833"/>
        <dbReference type="ChEBI" id="CHEBI:83834"/>
        <dbReference type="EC" id="5.2.1.8"/>
    </reaction>
</comment>
<comment type="subcellular location">
    <subcellularLocation>
        <location>Cytoplasm</location>
    </subcellularLocation>
    <text evidence="1">About half TF is bound to the ribosome near the polypeptide exit tunnel while the other half is free in the cytoplasm.</text>
</comment>
<comment type="domain">
    <text evidence="1">Consists of 3 domains; the N-terminus binds the ribosome, the middle domain has PPIase activity, while the C-terminus has intrinsic chaperone activity on its own.</text>
</comment>
<comment type="similarity">
    <text evidence="1">Belongs to the FKBP-type PPIase family. Tig subfamily.</text>
</comment>
<sequence length="439" mass="48630">MSANWKTTGKTTGELSFEISQDEIKKSLDKAFGRVKKSLRVPGFRKGHVSRVIFNQYYGEEALYEDALNFALPEAYSAAVKETGIKAVGQPQIVPVSMGKNKAWEMKAIVTVEPEVELGQYTEIEVPKQNTRVYQKDIDAELTKRQEQNAEMVLKNDKAENGDTVTIDYVGTVDGVEFDGGSAQNYSLELGSNTFIPGFEDQLVGHGAGEEVDVVVTFPEDYGAKDLAGKEAHFATKIHEVKAKQLPELDDEFAKDVDDSVETLDELKEKIKAELKSEKEEAAKAAIQEAAITTAVKNATVEEIPDVMIQEDVDNQLNQYLGDMQRQGIDPQTYFKLTNTTEDQLRSQLSANAAERVKTNLVLEAIVAKEGFEASKEEIDAEIKDLADNYNMSEKAVRNALSDEMLAHDINVRKAMDLITDSAKQVAKAKLEEGSEEDK</sequence>
<name>TIG_LACDA</name>
<evidence type="ECO:0000255" key="1">
    <source>
        <dbReference type="HAMAP-Rule" id="MF_00303"/>
    </source>
</evidence>
<reference key="1">
    <citation type="journal article" date="2006" name="Proc. Natl. Acad. Sci. U.S.A.">
        <title>The complete genome sequence of Lactobacillus bulgaricus reveals extensive and ongoing reductive evolution.</title>
        <authorList>
            <person name="van de Guchte M."/>
            <person name="Penaud S."/>
            <person name="Grimaldi C."/>
            <person name="Barbe V."/>
            <person name="Bryson K."/>
            <person name="Nicolas P."/>
            <person name="Robert C."/>
            <person name="Oztas S."/>
            <person name="Mangenot S."/>
            <person name="Couloux A."/>
            <person name="Loux V."/>
            <person name="Dervyn R."/>
            <person name="Bossy R."/>
            <person name="Bolotin A."/>
            <person name="Batto J.-M."/>
            <person name="Walunas T."/>
            <person name="Gibrat J.-F."/>
            <person name="Bessieres P."/>
            <person name="Weissenbach J."/>
            <person name="Ehrlich S.D."/>
            <person name="Maguin E."/>
        </authorList>
    </citation>
    <scope>NUCLEOTIDE SEQUENCE [LARGE SCALE GENOMIC DNA]</scope>
    <source>
        <strain>ATCC 11842 / DSM 20081 / BCRC 10696 / JCM 1002 / NBRC 13953 / NCIMB 11778 / NCTC 12712 / WDCM 00102 / Lb 14</strain>
    </source>
</reference>
<proteinExistence type="inferred from homology"/>
<keyword id="KW-0131">Cell cycle</keyword>
<keyword id="KW-0132">Cell division</keyword>
<keyword id="KW-0143">Chaperone</keyword>
<keyword id="KW-0963">Cytoplasm</keyword>
<keyword id="KW-0413">Isomerase</keyword>
<keyword id="KW-1185">Reference proteome</keyword>
<keyword id="KW-0697">Rotamase</keyword>
<gene>
    <name evidence="1" type="primary">tig</name>
    <name type="ordered locus">Ldb0777</name>
</gene>
<dbReference type="EC" id="5.2.1.8" evidence="1"/>
<dbReference type="EMBL" id="CR954253">
    <property type="protein sequence ID" value="CAI97604.1"/>
    <property type="molecule type" value="Genomic_DNA"/>
</dbReference>
<dbReference type="RefSeq" id="WP_003619232.1">
    <property type="nucleotide sequence ID" value="NZ_JQAV01000001.1"/>
</dbReference>
<dbReference type="SMR" id="Q1GAP9"/>
<dbReference type="STRING" id="390333.Ldb0777"/>
<dbReference type="KEGG" id="ldb:Ldb0777"/>
<dbReference type="PATRIC" id="fig|390333.13.peg.22"/>
<dbReference type="eggNOG" id="COG0544">
    <property type="taxonomic scope" value="Bacteria"/>
</dbReference>
<dbReference type="HOGENOM" id="CLU_033058_3_2_9"/>
<dbReference type="BioCyc" id="LDEL390333:LDB_RS03430-MONOMER"/>
<dbReference type="Proteomes" id="UP000001259">
    <property type="component" value="Chromosome"/>
</dbReference>
<dbReference type="GO" id="GO:0005737">
    <property type="term" value="C:cytoplasm"/>
    <property type="evidence" value="ECO:0007669"/>
    <property type="project" value="UniProtKB-SubCell"/>
</dbReference>
<dbReference type="GO" id="GO:0003755">
    <property type="term" value="F:peptidyl-prolyl cis-trans isomerase activity"/>
    <property type="evidence" value="ECO:0007669"/>
    <property type="project" value="UniProtKB-UniRule"/>
</dbReference>
<dbReference type="GO" id="GO:0044183">
    <property type="term" value="F:protein folding chaperone"/>
    <property type="evidence" value="ECO:0007669"/>
    <property type="project" value="TreeGrafter"/>
</dbReference>
<dbReference type="GO" id="GO:0043022">
    <property type="term" value="F:ribosome binding"/>
    <property type="evidence" value="ECO:0007669"/>
    <property type="project" value="TreeGrafter"/>
</dbReference>
<dbReference type="GO" id="GO:0051083">
    <property type="term" value="P:'de novo' cotranslational protein folding"/>
    <property type="evidence" value="ECO:0007669"/>
    <property type="project" value="TreeGrafter"/>
</dbReference>
<dbReference type="GO" id="GO:0051301">
    <property type="term" value="P:cell division"/>
    <property type="evidence" value="ECO:0007669"/>
    <property type="project" value="UniProtKB-KW"/>
</dbReference>
<dbReference type="GO" id="GO:0061077">
    <property type="term" value="P:chaperone-mediated protein folding"/>
    <property type="evidence" value="ECO:0007669"/>
    <property type="project" value="TreeGrafter"/>
</dbReference>
<dbReference type="GO" id="GO:0015031">
    <property type="term" value="P:protein transport"/>
    <property type="evidence" value="ECO:0007669"/>
    <property type="project" value="UniProtKB-UniRule"/>
</dbReference>
<dbReference type="GO" id="GO:0043335">
    <property type="term" value="P:protein unfolding"/>
    <property type="evidence" value="ECO:0007669"/>
    <property type="project" value="TreeGrafter"/>
</dbReference>
<dbReference type="FunFam" id="3.10.50.40:FF:000001">
    <property type="entry name" value="Trigger factor"/>
    <property type="match status" value="1"/>
</dbReference>
<dbReference type="Gene3D" id="3.10.50.40">
    <property type="match status" value="1"/>
</dbReference>
<dbReference type="Gene3D" id="3.30.70.1050">
    <property type="entry name" value="Trigger factor ribosome-binding domain"/>
    <property type="match status" value="1"/>
</dbReference>
<dbReference type="Gene3D" id="1.10.3120.10">
    <property type="entry name" value="Trigger factor, C-terminal domain"/>
    <property type="match status" value="1"/>
</dbReference>
<dbReference type="HAMAP" id="MF_00303">
    <property type="entry name" value="Trigger_factor_Tig"/>
    <property type="match status" value="1"/>
</dbReference>
<dbReference type="InterPro" id="IPR046357">
    <property type="entry name" value="PPIase_dom_sf"/>
</dbReference>
<dbReference type="InterPro" id="IPR001179">
    <property type="entry name" value="PPIase_FKBP_dom"/>
</dbReference>
<dbReference type="InterPro" id="IPR005215">
    <property type="entry name" value="Trig_fac"/>
</dbReference>
<dbReference type="InterPro" id="IPR008880">
    <property type="entry name" value="Trigger_fac_C"/>
</dbReference>
<dbReference type="InterPro" id="IPR037041">
    <property type="entry name" value="Trigger_fac_C_sf"/>
</dbReference>
<dbReference type="InterPro" id="IPR008881">
    <property type="entry name" value="Trigger_fac_ribosome-bd_bac"/>
</dbReference>
<dbReference type="InterPro" id="IPR036611">
    <property type="entry name" value="Trigger_fac_ribosome-bd_sf"/>
</dbReference>
<dbReference type="InterPro" id="IPR027304">
    <property type="entry name" value="Trigger_fact/SurA_dom_sf"/>
</dbReference>
<dbReference type="NCBIfam" id="TIGR00115">
    <property type="entry name" value="tig"/>
    <property type="match status" value="1"/>
</dbReference>
<dbReference type="PANTHER" id="PTHR30560">
    <property type="entry name" value="TRIGGER FACTOR CHAPERONE AND PEPTIDYL-PROLYL CIS/TRANS ISOMERASE"/>
    <property type="match status" value="1"/>
</dbReference>
<dbReference type="PANTHER" id="PTHR30560:SF3">
    <property type="entry name" value="TRIGGER FACTOR-LIKE PROTEIN TIG, CHLOROPLASTIC"/>
    <property type="match status" value="1"/>
</dbReference>
<dbReference type="Pfam" id="PF00254">
    <property type="entry name" value="FKBP_C"/>
    <property type="match status" value="1"/>
</dbReference>
<dbReference type="Pfam" id="PF05698">
    <property type="entry name" value="Trigger_C"/>
    <property type="match status" value="1"/>
</dbReference>
<dbReference type="Pfam" id="PF05697">
    <property type="entry name" value="Trigger_N"/>
    <property type="match status" value="1"/>
</dbReference>
<dbReference type="PIRSF" id="PIRSF003095">
    <property type="entry name" value="Trigger_factor"/>
    <property type="match status" value="1"/>
</dbReference>
<dbReference type="SUPFAM" id="SSF54534">
    <property type="entry name" value="FKBP-like"/>
    <property type="match status" value="1"/>
</dbReference>
<dbReference type="SUPFAM" id="SSF109998">
    <property type="entry name" value="Triger factor/SurA peptide-binding domain-like"/>
    <property type="match status" value="1"/>
</dbReference>
<dbReference type="SUPFAM" id="SSF102735">
    <property type="entry name" value="Trigger factor ribosome-binding domain"/>
    <property type="match status" value="1"/>
</dbReference>
<dbReference type="PROSITE" id="PS50059">
    <property type="entry name" value="FKBP_PPIASE"/>
    <property type="match status" value="1"/>
</dbReference>
<protein>
    <recommendedName>
        <fullName evidence="1">Trigger factor</fullName>
        <shortName evidence="1">TF</shortName>
        <ecNumber evidence="1">5.2.1.8</ecNumber>
    </recommendedName>
    <alternativeName>
        <fullName evidence="1">PPIase</fullName>
    </alternativeName>
</protein>
<accession>Q1GAP9</accession>
<organism>
    <name type="scientific">Lactobacillus delbrueckii subsp. bulgaricus (strain ATCC 11842 / DSM 20081 / BCRC 10696 / JCM 1002 / NBRC 13953 / NCIMB 11778 / NCTC 12712 / WDCM 00102 / Lb 14)</name>
    <dbReference type="NCBI Taxonomy" id="390333"/>
    <lineage>
        <taxon>Bacteria</taxon>
        <taxon>Bacillati</taxon>
        <taxon>Bacillota</taxon>
        <taxon>Bacilli</taxon>
        <taxon>Lactobacillales</taxon>
        <taxon>Lactobacillaceae</taxon>
        <taxon>Lactobacillus</taxon>
    </lineage>
</organism>
<feature type="chain" id="PRO_0000256567" description="Trigger factor">
    <location>
        <begin position="1"/>
        <end position="439"/>
    </location>
</feature>
<feature type="domain" description="PPIase FKBP-type" evidence="1">
    <location>
        <begin position="162"/>
        <end position="247"/>
    </location>
</feature>